<keyword id="KW-0068">Autocatalytic cleavage</keyword>
<keyword id="KW-0963">Cytoplasm</keyword>
<keyword id="KW-0210">Decarboxylase</keyword>
<keyword id="KW-0456">Lyase</keyword>
<keyword id="KW-0566">Pantothenate biosynthesis</keyword>
<keyword id="KW-0670">Pyruvate</keyword>
<keyword id="KW-0704">Schiff base</keyword>
<keyword id="KW-0865">Zymogen</keyword>
<sequence length="128" mass="14284">MQRHMLKSKIHRAAVTHCELHYEGSCAIDEDLLEAAGLIENERIDIWNINNGERFSTYAIKGERGSGMISLNGSAARRAQLGDLVIIAAFAMVDEAELQAGWKPKLVFIDEGNKIKGHRDHVPTQSWT</sequence>
<comment type="function">
    <text evidence="1">Catalyzes the pyruvoyl-dependent decarboxylation of aspartate to produce beta-alanine.</text>
</comment>
<comment type="catalytic activity">
    <reaction evidence="1">
        <text>L-aspartate + H(+) = beta-alanine + CO2</text>
        <dbReference type="Rhea" id="RHEA:19497"/>
        <dbReference type="ChEBI" id="CHEBI:15378"/>
        <dbReference type="ChEBI" id="CHEBI:16526"/>
        <dbReference type="ChEBI" id="CHEBI:29991"/>
        <dbReference type="ChEBI" id="CHEBI:57966"/>
        <dbReference type="EC" id="4.1.1.11"/>
    </reaction>
</comment>
<comment type="cofactor">
    <cofactor evidence="1">
        <name>pyruvate</name>
        <dbReference type="ChEBI" id="CHEBI:15361"/>
    </cofactor>
    <text evidence="1">Binds 1 pyruvoyl group covalently per subunit.</text>
</comment>
<comment type="pathway">
    <text evidence="1">Cofactor biosynthesis; (R)-pantothenate biosynthesis; beta-alanine from L-aspartate: step 1/1.</text>
</comment>
<comment type="subunit">
    <text evidence="1">Heterooctamer of four alpha and four beta subunits.</text>
</comment>
<comment type="subcellular location">
    <subcellularLocation>
        <location evidence="1">Cytoplasm</location>
    </subcellularLocation>
</comment>
<comment type="PTM">
    <text evidence="1">Is synthesized initially as an inactive proenzyme, which is activated by self-cleavage at a specific serine bond to produce a beta-subunit with a hydroxyl group at its C-terminus and an alpha-subunit with a pyruvoyl group at its N-terminus.</text>
</comment>
<comment type="similarity">
    <text evidence="1">Belongs to the PanD family.</text>
</comment>
<accession>A4JGX2</accession>
<dbReference type="EC" id="4.1.1.11" evidence="1"/>
<dbReference type="EMBL" id="CP000614">
    <property type="protein sequence ID" value="ABO55525.1"/>
    <property type="molecule type" value="Genomic_DNA"/>
</dbReference>
<dbReference type="SMR" id="A4JGX2"/>
<dbReference type="KEGG" id="bvi:Bcep1808_2527"/>
<dbReference type="eggNOG" id="COG0853">
    <property type="taxonomic scope" value="Bacteria"/>
</dbReference>
<dbReference type="HOGENOM" id="CLU_115305_2_1_4"/>
<dbReference type="UniPathway" id="UPA00028">
    <property type="reaction ID" value="UER00002"/>
</dbReference>
<dbReference type="Proteomes" id="UP000002287">
    <property type="component" value="Chromosome 1"/>
</dbReference>
<dbReference type="GO" id="GO:0005829">
    <property type="term" value="C:cytosol"/>
    <property type="evidence" value="ECO:0007669"/>
    <property type="project" value="TreeGrafter"/>
</dbReference>
<dbReference type="GO" id="GO:0004068">
    <property type="term" value="F:aspartate 1-decarboxylase activity"/>
    <property type="evidence" value="ECO:0007669"/>
    <property type="project" value="UniProtKB-UniRule"/>
</dbReference>
<dbReference type="GO" id="GO:0006523">
    <property type="term" value="P:alanine biosynthetic process"/>
    <property type="evidence" value="ECO:0007669"/>
    <property type="project" value="InterPro"/>
</dbReference>
<dbReference type="GO" id="GO:0015940">
    <property type="term" value="P:pantothenate biosynthetic process"/>
    <property type="evidence" value="ECO:0007669"/>
    <property type="project" value="UniProtKB-UniRule"/>
</dbReference>
<dbReference type="CDD" id="cd06919">
    <property type="entry name" value="Asp_decarbox"/>
    <property type="match status" value="1"/>
</dbReference>
<dbReference type="Gene3D" id="2.40.40.20">
    <property type="match status" value="1"/>
</dbReference>
<dbReference type="HAMAP" id="MF_00446">
    <property type="entry name" value="PanD"/>
    <property type="match status" value="1"/>
</dbReference>
<dbReference type="InterPro" id="IPR009010">
    <property type="entry name" value="Asp_de-COase-like_dom_sf"/>
</dbReference>
<dbReference type="InterPro" id="IPR003190">
    <property type="entry name" value="Asp_decarbox"/>
</dbReference>
<dbReference type="NCBIfam" id="TIGR00223">
    <property type="entry name" value="panD"/>
    <property type="match status" value="1"/>
</dbReference>
<dbReference type="PANTHER" id="PTHR21012">
    <property type="entry name" value="ASPARTATE 1-DECARBOXYLASE"/>
    <property type="match status" value="1"/>
</dbReference>
<dbReference type="PANTHER" id="PTHR21012:SF0">
    <property type="entry name" value="ASPARTATE 1-DECARBOXYLASE"/>
    <property type="match status" value="1"/>
</dbReference>
<dbReference type="Pfam" id="PF02261">
    <property type="entry name" value="Asp_decarbox"/>
    <property type="match status" value="1"/>
</dbReference>
<dbReference type="PIRSF" id="PIRSF006246">
    <property type="entry name" value="Asp_decarbox"/>
    <property type="match status" value="1"/>
</dbReference>
<dbReference type="SUPFAM" id="SSF50692">
    <property type="entry name" value="ADC-like"/>
    <property type="match status" value="1"/>
</dbReference>
<protein>
    <recommendedName>
        <fullName evidence="1">Aspartate 1-decarboxylase</fullName>
        <ecNumber evidence="1">4.1.1.11</ecNumber>
    </recommendedName>
    <alternativeName>
        <fullName evidence="1">Aspartate alpha-decarboxylase</fullName>
    </alternativeName>
    <component>
        <recommendedName>
            <fullName evidence="1">Aspartate 1-decarboxylase beta chain</fullName>
        </recommendedName>
    </component>
    <component>
        <recommendedName>
            <fullName evidence="1">Aspartate 1-decarboxylase alpha chain</fullName>
        </recommendedName>
    </component>
</protein>
<organism>
    <name type="scientific">Burkholderia vietnamiensis (strain G4 / LMG 22486)</name>
    <name type="common">Burkholderia cepacia (strain R1808)</name>
    <dbReference type="NCBI Taxonomy" id="269482"/>
    <lineage>
        <taxon>Bacteria</taxon>
        <taxon>Pseudomonadati</taxon>
        <taxon>Pseudomonadota</taxon>
        <taxon>Betaproteobacteria</taxon>
        <taxon>Burkholderiales</taxon>
        <taxon>Burkholderiaceae</taxon>
        <taxon>Burkholderia</taxon>
        <taxon>Burkholderia cepacia complex</taxon>
    </lineage>
</organism>
<gene>
    <name evidence="1" type="primary">panD</name>
    <name type="ordered locus">Bcep1808_2527</name>
</gene>
<proteinExistence type="inferred from homology"/>
<feature type="chain" id="PRO_1000026164" description="Aspartate 1-decarboxylase beta chain" evidence="1">
    <location>
        <begin position="1"/>
        <end position="24"/>
    </location>
</feature>
<feature type="chain" id="PRO_0000316055" description="Aspartate 1-decarboxylase alpha chain" evidence="1">
    <location>
        <begin position="25"/>
        <end position="128"/>
    </location>
</feature>
<feature type="active site" description="Schiff-base intermediate with substrate; via pyruvic acid" evidence="1">
    <location>
        <position position="25"/>
    </location>
</feature>
<feature type="active site" description="Proton donor" evidence="1">
    <location>
        <position position="58"/>
    </location>
</feature>
<feature type="binding site" evidence="1">
    <location>
        <position position="57"/>
    </location>
    <ligand>
        <name>substrate</name>
    </ligand>
</feature>
<feature type="binding site" evidence="1">
    <location>
        <begin position="73"/>
        <end position="75"/>
    </location>
    <ligand>
        <name>substrate</name>
    </ligand>
</feature>
<feature type="modified residue" description="Pyruvic acid (Ser)" evidence="1">
    <location>
        <position position="25"/>
    </location>
</feature>
<reference key="1">
    <citation type="submission" date="2007-03" db="EMBL/GenBank/DDBJ databases">
        <title>Complete sequence of chromosome 1 of Burkholderia vietnamiensis G4.</title>
        <authorList>
            <consortium name="US DOE Joint Genome Institute"/>
            <person name="Copeland A."/>
            <person name="Lucas S."/>
            <person name="Lapidus A."/>
            <person name="Barry K."/>
            <person name="Detter J.C."/>
            <person name="Glavina del Rio T."/>
            <person name="Hammon N."/>
            <person name="Israni S."/>
            <person name="Dalin E."/>
            <person name="Tice H."/>
            <person name="Pitluck S."/>
            <person name="Chain P."/>
            <person name="Malfatti S."/>
            <person name="Shin M."/>
            <person name="Vergez L."/>
            <person name="Schmutz J."/>
            <person name="Larimer F."/>
            <person name="Land M."/>
            <person name="Hauser L."/>
            <person name="Kyrpides N."/>
            <person name="Tiedje J."/>
            <person name="Richardson P."/>
        </authorList>
    </citation>
    <scope>NUCLEOTIDE SEQUENCE [LARGE SCALE GENOMIC DNA]</scope>
    <source>
        <strain>G4 / LMG 22486</strain>
    </source>
</reference>
<evidence type="ECO:0000255" key="1">
    <source>
        <dbReference type="HAMAP-Rule" id="MF_00446"/>
    </source>
</evidence>
<name>PAND_BURVG</name>